<keyword id="KW-0025">Alternative splicing</keyword>
<keyword id="KW-0072">Autophagy</keyword>
<keyword id="KW-0175">Coiled coil</keyword>
<keyword id="KW-0963">Cytoplasm</keyword>
<keyword id="KW-0968">Cytoplasmic vesicle</keyword>
<keyword id="KW-0967">Endosome</keyword>
<keyword id="KW-0333">Golgi apparatus</keyword>
<keyword id="KW-0479">Metal-binding</keyword>
<keyword id="KW-0597">Phosphoprotein</keyword>
<keyword id="KW-1185">Reference proteome</keyword>
<keyword id="KW-0862">Zinc</keyword>
<keyword id="KW-0863">Zinc-finger</keyword>
<comment type="function">
    <text evidence="1 2">Plays an important role in the maintenance of the Golgi complex, in membrane trafficking, in exocytosis, through its interaction with myosin VI and Rab8. Links myosin VI to the Golgi complex and plays an important role in Golgi ribbon formation. Negatively regulates the induction of IFNB in response to RNA virus infection. Plays a neuroprotective role in the eye and optic nerve. Probably part of the TNF-alpha signaling pathway that can shift the equilibrium toward induction of cell death. May act by regulating membrane trafficking and cellular morphogenesis via a complex that contains Rab8 and huntingtin (HD). Mediates the interaction of Rab8 with the probable GTPase-activating protein TBC1D17 during Rab8-mediated endocytic trafficking, such as that of transferrin receptor (TFRC/TfR); regulates Rab8 recruitment to tubules emanating from the endocytic recycling compartment. Autophagy receptor that interacts directly with both the cargo to become degraded and an autophagy modifier of the MAP1 LC3 family; targets ubiquitin-coated bacteria (xenophagy) and appears to function in the same pathway as SQSTM1 and CALCOCO2/NDP52.</text>
</comment>
<comment type="subunit">
    <text evidence="2">Self-associates. Interacts with HD. Interacts with GTF3A. Interacts with MYO6. Interacts (via UBAN) with ubiquitinated TFRC. Interacts with GTP-bound Rab8 (RAB8A and/or RAB8B). Interacts with TBC1D17. Interacts with TBK1. Interacts with TRAF3. Binds to linear ubiquitin chains. Interacts with LC3 family members MAP1LC3A, MAP1LC3B, GABARAP, GABARAPL1 and GABARAPL2; OPTN phosphorylation increases the association (at least with MAP1LC3B). Interacts with RAB12; the interaction may be indirect. Interacts with TBK1; this interaction leads to the Golgi localization of TBK1 and its subsequent activation. Interacts with palmitoyltransferase ZDHHC17/HIP14; the interaction does not lead to palmitoylation of OPTN. Interacts with CYLD. Interacts with TOM1; the interaction is indirect and is mediated by MYO6, which acts as a bridge between TOM1 and OPTN. Interacts with USP12; the interaction is independent of USP12 deubiquitinase activity and may be involved in regulation of autophagic flux.</text>
</comment>
<comment type="subcellular location">
    <subcellularLocation>
        <location evidence="1">Cytoplasm</location>
        <location evidence="1">Perinuclear region</location>
    </subcellularLocation>
    <subcellularLocation>
        <location evidence="2">Golgi apparatus</location>
    </subcellularLocation>
    <subcellularLocation>
        <location evidence="1">Golgi apparatus</location>
        <location evidence="1">trans-Golgi network</location>
    </subcellularLocation>
    <subcellularLocation>
        <location evidence="1">Cytoplasmic vesicle</location>
        <location evidence="1">Autophagosome</location>
    </subcellularLocation>
    <subcellularLocation>
        <location evidence="1">Cytoplasmic vesicle</location>
    </subcellularLocation>
    <subcellularLocation>
        <location evidence="1">Recycling endosome</location>
    </subcellularLocation>
    <text evidence="1 2">Found in the perinuclear region and associates with the Golgi apparatus. Colocalizes with MYO6 and RAB8 at the Golgi complex and in vesicular structures close to the plasma membrane. Localizes to LC3-positive cytoplasmic vesicles upon induction of autophagy.</text>
</comment>
<comment type="alternative products">
    <event type="alternative splicing"/>
    <isoform>
        <id>Q8R5M4-1</id>
        <name>1</name>
        <sequence type="displayed"/>
    </isoform>
    <isoform>
        <id>Q8R5M4-2</id>
        <name>2</name>
        <sequence type="described" ref="VSP_013263 VSP_013264"/>
    </isoform>
</comment>
<comment type="domain">
    <text evidence="1">The LIR (LC3-interacting region) motif mediates the interaction with ATG8 family proteins.</text>
</comment>
<comment type="domain">
    <text evidence="1">Ubiquitin-binding motif (UBAN) is essential for its inhibitory function, subcellular localization and interaction with TBK1.</text>
</comment>
<comment type="PTM">
    <text evidence="1">Phosphorylated by TBK1, leading to restrict bacterial proliferation in case of infection.</text>
</comment>
<comment type="sequence caution" evidence="7">
    <conflict type="frameshift">
        <sequence resource="EMBL-CDS" id="BAB84696"/>
    </conflict>
</comment>
<name>OPTN_RAT</name>
<dbReference type="EMBL" id="AB069907">
    <property type="protein sequence ID" value="BAB84696.2"/>
    <property type="status" value="ALT_FRAME"/>
    <property type="molecule type" value="mRNA"/>
</dbReference>
<dbReference type="EMBL" id="BC086976">
    <property type="protein sequence ID" value="AAH86976.1"/>
    <property type="molecule type" value="mRNA"/>
</dbReference>
<dbReference type="RefSeq" id="NP_659549.2">
    <property type="nucleotide sequence ID" value="NM_145081.3"/>
</dbReference>
<dbReference type="SMR" id="Q8R5M4"/>
<dbReference type="BioGRID" id="251574">
    <property type="interactions" value="3"/>
</dbReference>
<dbReference type="FunCoup" id="Q8R5M4">
    <property type="interactions" value="754"/>
</dbReference>
<dbReference type="STRING" id="10116.ENSRNOP00000045795"/>
<dbReference type="GlyGen" id="Q8R5M4">
    <property type="glycosylation" value="1 site"/>
</dbReference>
<dbReference type="iPTMnet" id="Q8R5M4"/>
<dbReference type="PhosphoSitePlus" id="Q8R5M4"/>
<dbReference type="PaxDb" id="10116-ENSRNOP00000045795"/>
<dbReference type="GeneID" id="246294"/>
<dbReference type="KEGG" id="rno:246294"/>
<dbReference type="AGR" id="RGD:628886"/>
<dbReference type="CTD" id="10133"/>
<dbReference type="RGD" id="628886">
    <property type="gene designation" value="Optn"/>
</dbReference>
<dbReference type="eggNOG" id="ENOG502QTG2">
    <property type="taxonomic scope" value="Eukaryota"/>
</dbReference>
<dbReference type="InParanoid" id="Q8R5M4"/>
<dbReference type="PhylomeDB" id="Q8R5M4"/>
<dbReference type="Reactome" id="R-RNO-2565942">
    <property type="pathway name" value="Regulation of PLK1 Activity at G2/M Transition"/>
</dbReference>
<dbReference type="Reactome" id="R-RNO-5205685">
    <property type="pathway name" value="PINK1-PRKN Mediated Mitophagy"/>
</dbReference>
<dbReference type="Reactome" id="R-RNO-5357905">
    <property type="pathway name" value="Regulation of TNFR1 signaling"/>
</dbReference>
<dbReference type="Reactome" id="R-RNO-5357956">
    <property type="pathway name" value="TNFR1-induced NF-kappa-B signaling pathway"/>
</dbReference>
<dbReference type="Reactome" id="R-RNO-8854214">
    <property type="pathway name" value="TBC/RABGAPs"/>
</dbReference>
<dbReference type="Reactome" id="R-RNO-936964">
    <property type="pathway name" value="Activation of IRF3, IRF7 mediated by TBK1, IKKEpsilon (IKBKE)"/>
</dbReference>
<dbReference type="Reactome" id="R-RNO-9824878">
    <property type="pathway name" value="Regulation of TBK1, IKKEpsilon (IKBKE)-mediated activation of IRF3, IRF7"/>
</dbReference>
<dbReference type="PRO" id="PR:Q8R5M4"/>
<dbReference type="Proteomes" id="UP000002494">
    <property type="component" value="Unplaced"/>
</dbReference>
<dbReference type="GO" id="GO:0005776">
    <property type="term" value="C:autophagosome"/>
    <property type="evidence" value="ECO:0007669"/>
    <property type="project" value="UniProtKB-SubCell"/>
</dbReference>
<dbReference type="GO" id="GO:0030424">
    <property type="term" value="C:axon"/>
    <property type="evidence" value="ECO:0000314"/>
    <property type="project" value="RGD"/>
</dbReference>
<dbReference type="GO" id="GO:0005737">
    <property type="term" value="C:cytoplasm"/>
    <property type="evidence" value="ECO:0000318"/>
    <property type="project" value="GO_Central"/>
</dbReference>
<dbReference type="GO" id="GO:0031410">
    <property type="term" value="C:cytoplasmic vesicle"/>
    <property type="evidence" value="ECO:0000314"/>
    <property type="project" value="UniProtKB"/>
</dbReference>
<dbReference type="GO" id="GO:0005794">
    <property type="term" value="C:Golgi apparatus"/>
    <property type="evidence" value="ECO:0000314"/>
    <property type="project" value="UniProtKB"/>
</dbReference>
<dbReference type="GO" id="GO:0043025">
    <property type="term" value="C:neuronal cell body"/>
    <property type="evidence" value="ECO:0000314"/>
    <property type="project" value="RGD"/>
</dbReference>
<dbReference type="GO" id="GO:0005634">
    <property type="term" value="C:nucleus"/>
    <property type="evidence" value="ECO:0000318"/>
    <property type="project" value="GO_Central"/>
</dbReference>
<dbReference type="GO" id="GO:0048471">
    <property type="term" value="C:perinuclear region of cytoplasm"/>
    <property type="evidence" value="ECO:0000314"/>
    <property type="project" value="RGD"/>
</dbReference>
<dbReference type="GO" id="GO:0055037">
    <property type="term" value="C:recycling endosome"/>
    <property type="evidence" value="ECO:0007669"/>
    <property type="project" value="UniProtKB-SubCell"/>
</dbReference>
<dbReference type="GO" id="GO:0005802">
    <property type="term" value="C:trans-Golgi network"/>
    <property type="evidence" value="ECO:0000250"/>
    <property type="project" value="UniProtKB"/>
</dbReference>
<dbReference type="GO" id="GO:0042802">
    <property type="term" value="F:identical protein binding"/>
    <property type="evidence" value="ECO:0000353"/>
    <property type="project" value="RGD"/>
</dbReference>
<dbReference type="GO" id="GO:0070530">
    <property type="term" value="F:K63-linked polyubiquitin modification-dependent protein binding"/>
    <property type="evidence" value="ECO:0000266"/>
    <property type="project" value="RGD"/>
</dbReference>
<dbReference type="GO" id="GO:0031593">
    <property type="term" value="F:polyubiquitin modification-dependent protein binding"/>
    <property type="evidence" value="ECO:0000266"/>
    <property type="project" value="RGD"/>
</dbReference>
<dbReference type="GO" id="GO:0030674">
    <property type="term" value="F:protein-macromolecule adaptor activity"/>
    <property type="evidence" value="ECO:0000266"/>
    <property type="project" value="RGD"/>
</dbReference>
<dbReference type="GO" id="GO:0001155">
    <property type="term" value="F:TFIIIA-class transcription factor binding"/>
    <property type="evidence" value="ECO:0000353"/>
    <property type="project" value="RGD"/>
</dbReference>
<dbReference type="GO" id="GO:0043130">
    <property type="term" value="F:ubiquitin binding"/>
    <property type="evidence" value="ECO:0000314"/>
    <property type="project" value="RGD"/>
</dbReference>
<dbReference type="GO" id="GO:0008270">
    <property type="term" value="F:zinc ion binding"/>
    <property type="evidence" value="ECO:0007669"/>
    <property type="project" value="UniProtKB-KW"/>
</dbReference>
<dbReference type="GO" id="GO:0070301">
    <property type="term" value="P:cellular response to hydrogen peroxide"/>
    <property type="evidence" value="ECO:0000270"/>
    <property type="project" value="RGD"/>
</dbReference>
<dbReference type="GO" id="GO:1905232">
    <property type="term" value="P:cellular response to L-glutamate"/>
    <property type="evidence" value="ECO:0000270"/>
    <property type="project" value="RGD"/>
</dbReference>
<dbReference type="GO" id="GO:1990090">
    <property type="term" value="P:cellular response to nerve growth factor stimulus"/>
    <property type="evidence" value="ECO:0000270"/>
    <property type="project" value="RGD"/>
</dbReference>
<dbReference type="GO" id="GO:0071356">
    <property type="term" value="P:cellular response to tumor necrosis factor"/>
    <property type="evidence" value="ECO:0000270"/>
    <property type="project" value="RGD"/>
</dbReference>
<dbReference type="GO" id="GO:0034620">
    <property type="term" value="P:cellular response to unfolded protein"/>
    <property type="evidence" value="ECO:0000250"/>
    <property type="project" value="UniProtKB"/>
</dbReference>
<dbReference type="GO" id="GO:0050829">
    <property type="term" value="P:defense response to Gram-negative bacterium"/>
    <property type="evidence" value="ECO:0000266"/>
    <property type="project" value="RGD"/>
</dbReference>
<dbReference type="GO" id="GO:0007030">
    <property type="term" value="P:Golgi organization"/>
    <property type="evidence" value="ECO:0000315"/>
    <property type="project" value="UniProtKB"/>
</dbReference>
<dbReference type="GO" id="GO:0090161">
    <property type="term" value="P:Golgi ribbon formation"/>
    <property type="evidence" value="ECO:0000250"/>
    <property type="project" value="UniProtKB"/>
</dbReference>
<dbReference type="GO" id="GO:0043001">
    <property type="term" value="P:Golgi to plasma membrane protein transport"/>
    <property type="evidence" value="ECO:0000266"/>
    <property type="project" value="RGD"/>
</dbReference>
<dbReference type="GO" id="GO:0043124">
    <property type="term" value="P:negative regulation of canonical NF-kappaB signal transduction"/>
    <property type="evidence" value="ECO:0000266"/>
    <property type="project" value="RGD"/>
</dbReference>
<dbReference type="GO" id="GO:0008285">
    <property type="term" value="P:negative regulation of cell population proliferation"/>
    <property type="evidence" value="ECO:0000315"/>
    <property type="project" value="RGD"/>
</dbReference>
<dbReference type="GO" id="GO:0043524">
    <property type="term" value="P:negative regulation of neuron apoptotic process"/>
    <property type="evidence" value="ECO:0000315"/>
    <property type="project" value="RGD"/>
</dbReference>
<dbReference type="GO" id="GO:0001920">
    <property type="term" value="P:negative regulation of receptor recycling"/>
    <property type="evidence" value="ECO:0000266"/>
    <property type="project" value="RGD"/>
</dbReference>
<dbReference type="GO" id="GO:0003407">
    <property type="term" value="P:neural retina development"/>
    <property type="evidence" value="ECO:0000270"/>
    <property type="project" value="RGD"/>
</dbReference>
<dbReference type="GO" id="GO:0010508">
    <property type="term" value="P:positive regulation of autophagy"/>
    <property type="evidence" value="ECO:0000266"/>
    <property type="project" value="RGD"/>
</dbReference>
<dbReference type="GO" id="GO:0008284">
    <property type="term" value="P:positive regulation of cell population proliferation"/>
    <property type="evidence" value="ECO:0000315"/>
    <property type="project" value="RGD"/>
</dbReference>
<dbReference type="GO" id="GO:0001819">
    <property type="term" value="P:positive regulation of cytokine production"/>
    <property type="evidence" value="ECO:0000315"/>
    <property type="project" value="RGD"/>
</dbReference>
<dbReference type="GO" id="GO:0010628">
    <property type="term" value="P:positive regulation of gene expression"/>
    <property type="evidence" value="ECO:0000315"/>
    <property type="project" value="RGD"/>
</dbReference>
<dbReference type="GO" id="GO:2000179">
    <property type="term" value="P:positive regulation of neural precursor cell proliferation"/>
    <property type="evidence" value="ECO:0000315"/>
    <property type="project" value="RGD"/>
</dbReference>
<dbReference type="GO" id="GO:0043525">
    <property type="term" value="P:positive regulation of neuron apoptotic process"/>
    <property type="evidence" value="ECO:0000315"/>
    <property type="project" value="RGD"/>
</dbReference>
<dbReference type="GO" id="GO:1904417">
    <property type="term" value="P:positive regulation of xenophagy"/>
    <property type="evidence" value="ECO:0000266"/>
    <property type="project" value="RGD"/>
</dbReference>
<dbReference type="GO" id="GO:0008104">
    <property type="term" value="P:protein localization"/>
    <property type="evidence" value="ECO:0000266"/>
    <property type="project" value="RGD"/>
</dbReference>
<dbReference type="GO" id="GO:0034067">
    <property type="term" value="P:protein localization to Golgi apparatus"/>
    <property type="evidence" value="ECO:0000266"/>
    <property type="project" value="RGD"/>
</dbReference>
<dbReference type="GO" id="GO:0043122">
    <property type="term" value="P:regulation of canonical NF-kappaB signal transduction"/>
    <property type="evidence" value="ECO:0000318"/>
    <property type="project" value="GO_Central"/>
</dbReference>
<dbReference type="GO" id="GO:0061734">
    <property type="term" value="P:type 2 mitophagy"/>
    <property type="evidence" value="ECO:0000266"/>
    <property type="project" value="RGD"/>
</dbReference>
<dbReference type="CDD" id="cd09803">
    <property type="entry name" value="UBAN"/>
    <property type="match status" value="1"/>
</dbReference>
<dbReference type="FunFam" id="1.20.5.390:FF:000004">
    <property type="entry name" value="Optineurin"/>
    <property type="match status" value="1"/>
</dbReference>
<dbReference type="FunFam" id="1.20.5.390:FF:000007">
    <property type="entry name" value="Optineurin"/>
    <property type="match status" value="1"/>
</dbReference>
<dbReference type="FunFam" id="1.20.5.990:FF:000002">
    <property type="entry name" value="Optineurin"/>
    <property type="match status" value="1"/>
</dbReference>
<dbReference type="Gene3D" id="1.20.5.390">
    <property type="entry name" value="L1 transposable element, trimerization domain"/>
    <property type="match status" value="2"/>
</dbReference>
<dbReference type="Gene3D" id="1.20.5.990">
    <property type="entry name" value="Nemo cc2-lz domain - 1d5 darpin complex"/>
    <property type="match status" value="1"/>
</dbReference>
<dbReference type="InterPro" id="IPR032419">
    <property type="entry name" value="CC2-LZ_dom"/>
</dbReference>
<dbReference type="InterPro" id="IPR021063">
    <property type="entry name" value="NEMO_N"/>
</dbReference>
<dbReference type="InterPro" id="IPR034735">
    <property type="entry name" value="NEMO_ZF"/>
</dbReference>
<dbReference type="InterPro" id="IPR051301">
    <property type="entry name" value="Optineurin/NFkB_EssMod"/>
</dbReference>
<dbReference type="PANTHER" id="PTHR31553">
    <property type="entry name" value="NF-KAPPA-B ESSENTIAL MODULATOR"/>
    <property type="match status" value="1"/>
</dbReference>
<dbReference type="PANTHER" id="PTHR31553:SF2">
    <property type="entry name" value="OPTINEURIN"/>
    <property type="match status" value="1"/>
</dbReference>
<dbReference type="Pfam" id="PF16516">
    <property type="entry name" value="CC2-LZ"/>
    <property type="match status" value="1"/>
</dbReference>
<dbReference type="Pfam" id="PF11577">
    <property type="entry name" value="NEMO"/>
    <property type="match status" value="1"/>
</dbReference>
<dbReference type="Pfam" id="PF18414">
    <property type="entry name" value="zf_C2H2_10"/>
    <property type="match status" value="1"/>
</dbReference>
<dbReference type="PROSITE" id="PS51801">
    <property type="entry name" value="ZF_CCHC_NOA"/>
    <property type="match status" value="1"/>
</dbReference>
<reference key="1">
    <citation type="submission" date="2001-08" db="EMBL/GenBank/DDBJ databases">
        <title>Identification of genes expressed in rat injured dental pulp.</title>
        <authorList>
            <person name="Myokai F."/>
            <person name="Oyama M."/>
        </authorList>
    </citation>
    <scope>NUCLEOTIDE SEQUENCE [MRNA] (ISOFORM 1)</scope>
</reference>
<reference key="2">
    <citation type="journal article" date="2004" name="Genome Res.">
        <title>The status, quality, and expansion of the NIH full-length cDNA project: the Mammalian Gene Collection (MGC).</title>
        <authorList>
            <consortium name="The MGC Project Team"/>
        </authorList>
    </citation>
    <scope>NUCLEOTIDE SEQUENCE [LARGE SCALE MRNA] (ISOFORM 2)</scope>
    <source>
        <tissue>Testis</tissue>
    </source>
</reference>
<reference key="3">
    <citation type="journal article" date="2012" name="Nat. Commun.">
        <title>Quantitative maps of protein phosphorylation sites across 14 different rat organs and tissues.</title>
        <authorList>
            <person name="Lundby A."/>
            <person name="Secher A."/>
            <person name="Lage K."/>
            <person name="Nordsborg N.B."/>
            <person name="Dmytriyev A."/>
            <person name="Lundby C."/>
            <person name="Olsen J.V."/>
        </authorList>
    </citation>
    <scope>PHOSPHORYLATION [LARGE SCALE ANALYSIS] AT SER-188 AND SER-346</scope>
    <scope>IDENTIFICATION BY MASS SPECTROMETRY [LARGE SCALE ANALYSIS]</scope>
</reference>
<feature type="chain" id="PRO_0000058072" description="Optineurin">
    <location>
        <begin position="1"/>
        <end position="585"/>
    </location>
</feature>
<feature type="zinc finger region" description="CCHC NOA-type" evidence="4">
    <location>
        <begin position="555"/>
        <end position="585"/>
    </location>
</feature>
<feature type="region of interest" description="Disordered" evidence="5">
    <location>
        <begin position="1"/>
        <end position="32"/>
    </location>
</feature>
<feature type="region of interest" description="Interaction with Rab8" evidence="1">
    <location>
        <begin position="58"/>
        <end position="220"/>
    </location>
</feature>
<feature type="region of interest" description="Disordered" evidence="5">
    <location>
        <begin position="200"/>
        <end position="220"/>
    </location>
</feature>
<feature type="region of interest" description="Disordered" evidence="5">
    <location>
        <begin position="269"/>
        <end position="299"/>
    </location>
</feature>
<feature type="region of interest" description="Interaction with HD" evidence="1">
    <location>
        <begin position="415"/>
        <end position="585"/>
    </location>
</feature>
<feature type="region of interest" description="Interaction with MYO6" evidence="2">
    <location>
        <begin position="416"/>
        <end position="525"/>
    </location>
</feature>
<feature type="coiled-coil region" evidence="3">
    <location>
        <begin position="38"/>
        <end position="181"/>
    </location>
</feature>
<feature type="coiled-coil region" evidence="3">
    <location>
        <begin position="244"/>
        <end position="512"/>
    </location>
</feature>
<feature type="short sequence motif" description="LIR">
    <location>
        <begin position="187"/>
        <end position="192"/>
    </location>
</feature>
<feature type="short sequence motif" description="UBAN">
    <location>
        <begin position="478"/>
        <end position="483"/>
    </location>
</feature>
<feature type="compositionally biased region" description="Polar residues" evidence="5">
    <location>
        <begin position="16"/>
        <end position="25"/>
    </location>
</feature>
<feature type="binding site" evidence="4">
    <location>
        <position position="563"/>
    </location>
    <ligand>
        <name>Zn(2+)</name>
        <dbReference type="ChEBI" id="CHEBI:29105"/>
    </ligand>
</feature>
<feature type="binding site" evidence="4">
    <location>
        <position position="566"/>
    </location>
    <ligand>
        <name>Zn(2+)</name>
        <dbReference type="ChEBI" id="CHEBI:29105"/>
    </ligand>
</feature>
<feature type="binding site" evidence="4">
    <location>
        <position position="579"/>
    </location>
    <ligand>
        <name>Zn(2+)</name>
        <dbReference type="ChEBI" id="CHEBI:29105"/>
    </ligand>
</feature>
<feature type="binding site" evidence="4">
    <location>
        <position position="583"/>
    </location>
    <ligand>
        <name>Zn(2+)</name>
        <dbReference type="ChEBI" id="CHEBI:29105"/>
    </ligand>
</feature>
<feature type="modified residue" description="Phosphoserine" evidence="9">
    <location>
        <position position="188"/>
    </location>
</feature>
<feature type="modified residue" description="Phosphoserine" evidence="2">
    <location>
        <position position="209"/>
    </location>
</feature>
<feature type="modified residue" description="Phosphoserine" evidence="9">
    <location>
        <position position="346"/>
    </location>
</feature>
<feature type="modified residue" description="Phosphoserine" evidence="2">
    <location>
        <position position="531"/>
    </location>
</feature>
<feature type="splice variant" id="VSP_013263" description="In isoform 2." evidence="6">
    <original>IQVRRLQAEKADLLGIVSELQLKLNSGGSSEDSFVEIRMT</original>
    <variation>NQ</variation>
    <location>
        <begin position="156"/>
        <end position="195"/>
    </location>
</feature>
<feature type="splice variant" id="VSP_013264" description="In isoform 2." evidence="6">
    <location>
        <position position="515"/>
    </location>
</feature>
<feature type="sequence conflict" description="In Ref. 1; BAB84696." evidence="7" ref="1">
    <original>K</original>
    <variation>R</variation>
    <location>
        <position position="78"/>
    </location>
</feature>
<feature type="sequence conflict" description="In Ref. 1." evidence="7" ref="1">
    <original>VSE</original>
    <variation>RLR</variation>
    <location>
        <begin position="172"/>
        <end position="174"/>
    </location>
</feature>
<feature type="sequence conflict" description="In Ref. 1; BAB84696." evidence="7" ref="1">
    <original>S</original>
    <variation>I</variation>
    <location>
        <position position="219"/>
    </location>
</feature>
<feature type="sequence conflict" description="In Ref. 1; BAB84696." evidence="7" ref="1">
    <original>E</original>
    <variation>G</variation>
    <location>
        <position position="316"/>
    </location>
</feature>
<feature type="sequence conflict" description="In Ref. 1; BAB84696." evidence="7" ref="1">
    <original>R</original>
    <variation>W</variation>
    <location>
        <position position="363"/>
    </location>
</feature>
<feature type="sequence conflict" description="In Ref. 1; BAB84696." evidence="7" ref="1">
    <original>E</original>
    <variation>K</variation>
    <location>
        <position position="545"/>
    </location>
</feature>
<evidence type="ECO:0000250" key="1"/>
<evidence type="ECO:0000250" key="2">
    <source>
        <dbReference type="UniProtKB" id="Q96CV9"/>
    </source>
</evidence>
<evidence type="ECO:0000255" key="3"/>
<evidence type="ECO:0000255" key="4">
    <source>
        <dbReference type="PROSITE-ProRule" id="PRU01142"/>
    </source>
</evidence>
<evidence type="ECO:0000256" key="5">
    <source>
        <dbReference type="SAM" id="MobiDB-lite"/>
    </source>
</evidence>
<evidence type="ECO:0000303" key="6">
    <source>
    </source>
</evidence>
<evidence type="ECO:0000305" key="7"/>
<evidence type="ECO:0000312" key="8">
    <source>
        <dbReference type="Proteomes" id="UP000002494"/>
    </source>
</evidence>
<evidence type="ECO:0007744" key="9">
    <source>
    </source>
</evidence>
<accession>Q8R5M4</accession>
<accession>Q5PQX8</accession>
<protein>
    <recommendedName>
        <fullName>Optineurin</fullName>
    </recommendedName>
    <alternativeName>
        <fullName>FIP-2-like protein</fullName>
    </alternativeName>
</protein>
<sequence length="585" mass="67014">MSHQPLSCLTEKGDSSCETPGNGPSNMVHPNLDTFTPEELLQQMKELLVENHQLKEAMKLNNQAMKGRFEELSAWTEKQKEERQLFEIQSKEAKERLKALSHENERLKEELGKLKEKSERPFEDITGRCGFPRTDLEQEVEQLKRQVEQEVEHLKIQVRRLQAEKADLLGIVSELQLKLNSGGSSEDSFVEIRMTEGEAEGAMKEMRNSAGPTRTDSISMGKCTEDARTCVEFEELTVSQLLLCLREGNQKVERLEIALREAKERISDFEKKANGHSAIETQTEGSTQKEEEDKDPESVGIEVETLNVQVASLFKELQEAHTKLSEAELMKKRLQEKCQALERKNSATPSELNEKQELVYSNRKLELQVESMRSEIKMEQAKTEEEKSRLATLQATHDKLLQEHNKALRTIEELTKQQAEKVDKVQLQELSEKLELAEQALASKQLQMDEMKQTIAKQEEDLETMAVLRAQMEVYCSDFHAERAAREKIHEEKEQLALQLAILLKENNDFEDGGSRQSLMEMQCRHGARTSDSDQQAYLFQRGAEDMSWQHGQQPRSIPIHSCPKCGEVLPDIDTLQIHVMDCII</sequence>
<proteinExistence type="evidence at protein level"/>
<organism evidence="8">
    <name type="scientific">Rattus norvegicus</name>
    <name type="common">Rat</name>
    <dbReference type="NCBI Taxonomy" id="10116"/>
    <lineage>
        <taxon>Eukaryota</taxon>
        <taxon>Metazoa</taxon>
        <taxon>Chordata</taxon>
        <taxon>Craniata</taxon>
        <taxon>Vertebrata</taxon>
        <taxon>Euteleostomi</taxon>
        <taxon>Mammalia</taxon>
        <taxon>Eutheria</taxon>
        <taxon>Euarchontoglires</taxon>
        <taxon>Glires</taxon>
        <taxon>Rodentia</taxon>
        <taxon>Myomorpha</taxon>
        <taxon>Muroidea</taxon>
        <taxon>Muridae</taxon>
        <taxon>Murinae</taxon>
        <taxon>Rattus</taxon>
    </lineage>
</organism>
<gene>
    <name type="primary">Optn</name>
</gene>